<dbReference type="EMBL" id="CP000503">
    <property type="protein sequence ID" value="ABM25572.1"/>
    <property type="molecule type" value="Genomic_DNA"/>
</dbReference>
<dbReference type="RefSeq" id="WP_011790028.1">
    <property type="nucleotide sequence ID" value="NC_008750.1"/>
</dbReference>
<dbReference type="SMR" id="A1RLM7"/>
<dbReference type="GeneID" id="67442868"/>
<dbReference type="KEGG" id="shw:Sputw3181_2755"/>
<dbReference type="HOGENOM" id="CLU_040318_1_2_6"/>
<dbReference type="Proteomes" id="UP000002597">
    <property type="component" value="Chromosome"/>
</dbReference>
<dbReference type="GO" id="GO:0022627">
    <property type="term" value="C:cytosolic small ribosomal subunit"/>
    <property type="evidence" value="ECO:0007669"/>
    <property type="project" value="TreeGrafter"/>
</dbReference>
<dbReference type="GO" id="GO:0003735">
    <property type="term" value="F:structural constituent of ribosome"/>
    <property type="evidence" value="ECO:0007669"/>
    <property type="project" value="InterPro"/>
</dbReference>
<dbReference type="GO" id="GO:0006412">
    <property type="term" value="P:translation"/>
    <property type="evidence" value="ECO:0007669"/>
    <property type="project" value="UniProtKB-UniRule"/>
</dbReference>
<dbReference type="CDD" id="cd01425">
    <property type="entry name" value="RPS2"/>
    <property type="match status" value="1"/>
</dbReference>
<dbReference type="FunFam" id="1.10.287.610:FF:000001">
    <property type="entry name" value="30S ribosomal protein S2"/>
    <property type="match status" value="1"/>
</dbReference>
<dbReference type="Gene3D" id="3.40.50.10490">
    <property type="entry name" value="Glucose-6-phosphate isomerase like protein, domain 1"/>
    <property type="match status" value="1"/>
</dbReference>
<dbReference type="Gene3D" id="1.10.287.610">
    <property type="entry name" value="Helix hairpin bin"/>
    <property type="match status" value="1"/>
</dbReference>
<dbReference type="HAMAP" id="MF_00291_B">
    <property type="entry name" value="Ribosomal_uS2_B"/>
    <property type="match status" value="1"/>
</dbReference>
<dbReference type="InterPro" id="IPR001865">
    <property type="entry name" value="Ribosomal_uS2"/>
</dbReference>
<dbReference type="InterPro" id="IPR005706">
    <property type="entry name" value="Ribosomal_uS2_bac/mit/plastid"/>
</dbReference>
<dbReference type="InterPro" id="IPR018130">
    <property type="entry name" value="Ribosomal_uS2_CS"/>
</dbReference>
<dbReference type="InterPro" id="IPR023591">
    <property type="entry name" value="Ribosomal_uS2_flav_dom_sf"/>
</dbReference>
<dbReference type="NCBIfam" id="TIGR01011">
    <property type="entry name" value="rpsB_bact"/>
    <property type="match status" value="1"/>
</dbReference>
<dbReference type="PANTHER" id="PTHR12534">
    <property type="entry name" value="30S RIBOSOMAL PROTEIN S2 PROKARYOTIC AND ORGANELLAR"/>
    <property type="match status" value="1"/>
</dbReference>
<dbReference type="PANTHER" id="PTHR12534:SF0">
    <property type="entry name" value="SMALL RIBOSOMAL SUBUNIT PROTEIN US2M"/>
    <property type="match status" value="1"/>
</dbReference>
<dbReference type="Pfam" id="PF00318">
    <property type="entry name" value="Ribosomal_S2"/>
    <property type="match status" value="1"/>
</dbReference>
<dbReference type="PRINTS" id="PR00395">
    <property type="entry name" value="RIBOSOMALS2"/>
</dbReference>
<dbReference type="SUPFAM" id="SSF52313">
    <property type="entry name" value="Ribosomal protein S2"/>
    <property type="match status" value="1"/>
</dbReference>
<dbReference type="PROSITE" id="PS00962">
    <property type="entry name" value="RIBOSOMAL_S2_1"/>
    <property type="match status" value="1"/>
</dbReference>
<dbReference type="PROSITE" id="PS00963">
    <property type="entry name" value="RIBOSOMAL_S2_2"/>
    <property type="match status" value="1"/>
</dbReference>
<proteinExistence type="inferred from homology"/>
<keyword id="KW-0687">Ribonucleoprotein</keyword>
<keyword id="KW-0689">Ribosomal protein</keyword>
<comment type="similarity">
    <text evidence="1">Belongs to the universal ribosomal protein uS2 family.</text>
</comment>
<accession>A1RLM7</accession>
<organism>
    <name type="scientific">Shewanella sp. (strain W3-18-1)</name>
    <dbReference type="NCBI Taxonomy" id="351745"/>
    <lineage>
        <taxon>Bacteria</taxon>
        <taxon>Pseudomonadati</taxon>
        <taxon>Pseudomonadota</taxon>
        <taxon>Gammaproteobacteria</taxon>
        <taxon>Alteromonadales</taxon>
        <taxon>Shewanellaceae</taxon>
        <taxon>Shewanella</taxon>
    </lineage>
</organism>
<reference key="1">
    <citation type="submission" date="2006-12" db="EMBL/GenBank/DDBJ databases">
        <title>Complete sequence of Shewanella sp. W3-18-1.</title>
        <authorList>
            <consortium name="US DOE Joint Genome Institute"/>
            <person name="Copeland A."/>
            <person name="Lucas S."/>
            <person name="Lapidus A."/>
            <person name="Barry K."/>
            <person name="Detter J.C."/>
            <person name="Glavina del Rio T."/>
            <person name="Hammon N."/>
            <person name="Israni S."/>
            <person name="Dalin E."/>
            <person name="Tice H."/>
            <person name="Pitluck S."/>
            <person name="Chain P."/>
            <person name="Malfatti S."/>
            <person name="Shin M."/>
            <person name="Vergez L."/>
            <person name="Schmutz J."/>
            <person name="Larimer F."/>
            <person name="Land M."/>
            <person name="Hauser L."/>
            <person name="Kyrpides N."/>
            <person name="Lykidis A."/>
            <person name="Tiedje J."/>
            <person name="Richardson P."/>
        </authorList>
    </citation>
    <scope>NUCLEOTIDE SEQUENCE [LARGE SCALE GENOMIC DNA]</scope>
    <source>
        <strain>W3-18-1</strain>
    </source>
</reference>
<name>RS2_SHESW</name>
<feature type="chain" id="PRO_1000004070" description="Small ribosomal subunit protein uS2">
    <location>
        <begin position="1"/>
        <end position="242"/>
    </location>
</feature>
<evidence type="ECO:0000255" key="1">
    <source>
        <dbReference type="HAMAP-Rule" id="MF_00291"/>
    </source>
</evidence>
<evidence type="ECO:0000305" key="2"/>
<gene>
    <name evidence="1" type="primary">rpsB</name>
    <name type="ordered locus">Sputw3181_2755</name>
</gene>
<sequence>MTTVSMRDMLQAGVHFGHQTRYWNPKMKPFIFGARNGVHIINLEHTVPMFNEALAFISNVASKKGKVLFVGTKRAAGEAIKEAAISCDQYYVDHRWLGGMLTNWKTVRQSIKRLKELESQSVDGTFDKLTKKEALMRTRELEKLEKSLGGIKNMGGLPDVLFVIGADHEHIAIKEANNLGIPVVAVVDTNSAPDGVNYIVPGNDDAMRAIRLYTTSVAAAAKAGRGQDLAVQAEQDGFVEAE</sequence>
<protein>
    <recommendedName>
        <fullName evidence="1">Small ribosomal subunit protein uS2</fullName>
    </recommendedName>
    <alternativeName>
        <fullName evidence="2">30S ribosomal protein S2</fullName>
    </alternativeName>
</protein>